<name>ISPT1_CORGL</name>
<organism>
    <name type="scientific">Corynebacterium glutamicum (strain ATCC 13032 / DSM 20300 / JCM 1318 / BCRC 11384 / CCUG 27702 / LMG 3730 / NBRC 12168 / NCIMB 10025 / NRRL B-2784 / 534)</name>
    <dbReference type="NCBI Taxonomy" id="196627"/>
    <lineage>
        <taxon>Bacteria</taxon>
        <taxon>Bacillati</taxon>
        <taxon>Actinomycetota</taxon>
        <taxon>Actinomycetes</taxon>
        <taxon>Mycobacteriales</taxon>
        <taxon>Corynebacteriaceae</taxon>
        <taxon>Corynebacterium</taxon>
    </lineage>
</organism>
<dbReference type="EC" id="2.5.1.-" evidence="1"/>
<dbReference type="EMBL" id="L07603">
    <property type="status" value="NOT_ANNOTATED_CDS"/>
    <property type="molecule type" value="Genomic_DNA"/>
</dbReference>
<dbReference type="EMBL" id="BA000036">
    <property type="protein sequence ID" value="BAB98384.1"/>
    <property type="molecule type" value="Genomic_DNA"/>
</dbReference>
<dbReference type="EMBL" id="BX927151">
    <property type="protein sequence ID" value="CAF19697.1"/>
    <property type="status" value="ALT_INIT"/>
    <property type="molecule type" value="Genomic_DNA"/>
</dbReference>
<dbReference type="RefSeq" id="NP_600218.1">
    <property type="nucleotide sequence ID" value="NC_003450.3"/>
</dbReference>
<dbReference type="SMR" id="P38118"/>
<dbReference type="STRING" id="196627.cg1130"/>
<dbReference type="KEGG" id="cgb:cg1130"/>
<dbReference type="KEGG" id="cgl:Cgl0991"/>
<dbReference type="PATRIC" id="fig|196627.13.peg.975"/>
<dbReference type="eggNOG" id="COG0020">
    <property type="taxonomic scope" value="Bacteria"/>
</dbReference>
<dbReference type="HOGENOM" id="CLU_038505_2_0_11"/>
<dbReference type="OrthoDB" id="4191603at2"/>
<dbReference type="BioCyc" id="CORYNE:G18NG-10563-MONOMER"/>
<dbReference type="Proteomes" id="UP000000582">
    <property type="component" value="Chromosome"/>
</dbReference>
<dbReference type="Proteomes" id="UP000001009">
    <property type="component" value="Chromosome"/>
</dbReference>
<dbReference type="GO" id="GO:0005886">
    <property type="term" value="C:plasma membrane"/>
    <property type="evidence" value="ECO:0007669"/>
    <property type="project" value="TreeGrafter"/>
</dbReference>
<dbReference type="GO" id="GO:0045547">
    <property type="term" value="F:ditrans,polycis-polyprenyl diphosphate synthase [(2E,6E)-farnesyl diphosphate specific] activity"/>
    <property type="evidence" value="ECO:0007669"/>
    <property type="project" value="TreeGrafter"/>
</dbReference>
<dbReference type="GO" id="GO:0000287">
    <property type="term" value="F:magnesium ion binding"/>
    <property type="evidence" value="ECO:0007669"/>
    <property type="project" value="UniProtKB-UniRule"/>
</dbReference>
<dbReference type="GO" id="GO:0033850">
    <property type="term" value="F:Z-farnesyl diphosphate synthase activity"/>
    <property type="evidence" value="ECO:0007669"/>
    <property type="project" value="TreeGrafter"/>
</dbReference>
<dbReference type="GO" id="GO:0016094">
    <property type="term" value="P:polyprenol biosynthetic process"/>
    <property type="evidence" value="ECO:0007669"/>
    <property type="project" value="TreeGrafter"/>
</dbReference>
<dbReference type="CDD" id="cd00475">
    <property type="entry name" value="Cis_IPPS"/>
    <property type="match status" value="1"/>
</dbReference>
<dbReference type="FunFam" id="3.40.1180.10:FF:000003">
    <property type="entry name" value="Isoprenyl transferase 2"/>
    <property type="match status" value="1"/>
</dbReference>
<dbReference type="Gene3D" id="3.40.1180.10">
    <property type="entry name" value="Decaprenyl diphosphate synthase-like"/>
    <property type="match status" value="1"/>
</dbReference>
<dbReference type="HAMAP" id="MF_01139">
    <property type="entry name" value="ISPT"/>
    <property type="match status" value="1"/>
</dbReference>
<dbReference type="InterPro" id="IPR001441">
    <property type="entry name" value="UPP_synth-like"/>
</dbReference>
<dbReference type="InterPro" id="IPR018520">
    <property type="entry name" value="UPP_synth-like_CS"/>
</dbReference>
<dbReference type="InterPro" id="IPR036424">
    <property type="entry name" value="UPP_synth-like_sf"/>
</dbReference>
<dbReference type="NCBIfam" id="NF011403">
    <property type="entry name" value="PRK14828.1"/>
    <property type="match status" value="1"/>
</dbReference>
<dbReference type="NCBIfam" id="TIGR00055">
    <property type="entry name" value="uppS"/>
    <property type="match status" value="1"/>
</dbReference>
<dbReference type="PANTHER" id="PTHR10291:SF43">
    <property type="entry name" value="DEHYDRODOLICHYL DIPHOSPHATE SYNTHASE COMPLEX SUBUNIT DHDDS"/>
    <property type="match status" value="1"/>
</dbReference>
<dbReference type="PANTHER" id="PTHR10291">
    <property type="entry name" value="DEHYDRODOLICHYL DIPHOSPHATE SYNTHASE FAMILY MEMBER"/>
    <property type="match status" value="1"/>
</dbReference>
<dbReference type="Pfam" id="PF01255">
    <property type="entry name" value="Prenyltransf"/>
    <property type="match status" value="1"/>
</dbReference>
<dbReference type="SUPFAM" id="SSF64005">
    <property type="entry name" value="Undecaprenyl diphosphate synthase"/>
    <property type="match status" value="1"/>
</dbReference>
<dbReference type="PROSITE" id="PS01066">
    <property type="entry name" value="UPP_SYNTHASE"/>
    <property type="match status" value="1"/>
</dbReference>
<protein>
    <recommendedName>
        <fullName evidence="1">Isoprenyl transferase 1</fullName>
        <ecNumber evidence="1">2.5.1.-</ecNumber>
    </recommendedName>
</protein>
<gene>
    <name evidence="1" type="primary">uppS1</name>
    <name type="ordered locus">Cgl0991</name>
    <name type="ordered locus">cg1130</name>
</gene>
<accession>P38118</accession>
<keyword id="KW-0460">Magnesium</keyword>
<keyword id="KW-0479">Metal-binding</keyword>
<keyword id="KW-1185">Reference proteome</keyword>
<keyword id="KW-0808">Transferase</keyword>
<reference key="1">
    <citation type="journal article" date="1993" name="FEMS Microbiol. Lett.">
        <title>The cloning and nucleotide sequence of a Corynebacterium glutamicum 3-deoxy-D-arabinoheptulosonate-7-phosphate synthase gene.</title>
        <authorList>
            <person name="Chen C.-C."/>
            <person name="Liao C.-C."/>
            <person name="Hsu W.-H."/>
        </authorList>
    </citation>
    <scope>NUCLEOTIDE SEQUENCE [GENOMIC DNA]</scope>
    <source>
        <strain>CCRC 18310</strain>
    </source>
</reference>
<reference key="2">
    <citation type="journal article" date="2003" name="Appl. Microbiol. Biotechnol.">
        <title>The Corynebacterium glutamicum genome: features and impacts on biotechnological processes.</title>
        <authorList>
            <person name="Ikeda M."/>
            <person name="Nakagawa S."/>
        </authorList>
    </citation>
    <scope>NUCLEOTIDE SEQUENCE [LARGE SCALE GENOMIC DNA]</scope>
    <source>
        <strain>ATCC 13032 / DSM 20300 / JCM 1318 / BCRC 11384 / CCUG 27702 / LMG 3730 / NBRC 12168 / NCIMB 10025 / NRRL B-2784 / 534</strain>
    </source>
</reference>
<reference key="3">
    <citation type="journal article" date="2003" name="J. Biotechnol.">
        <title>The complete Corynebacterium glutamicum ATCC 13032 genome sequence and its impact on the production of L-aspartate-derived amino acids and vitamins.</title>
        <authorList>
            <person name="Kalinowski J."/>
            <person name="Bathe B."/>
            <person name="Bartels D."/>
            <person name="Bischoff N."/>
            <person name="Bott M."/>
            <person name="Burkovski A."/>
            <person name="Dusch N."/>
            <person name="Eggeling L."/>
            <person name="Eikmanns B.J."/>
            <person name="Gaigalat L."/>
            <person name="Goesmann A."/>
            <person name="Hartmann M."/>
            <person name="Huthmacher K."/>
            <person name="Kraemer R."/>
            <person name="Linke B."/>
            <person name="McHardy A.C."/>
            <person name="Meyer F."/>
            <person name="Moeckel B."/>
            <person name="Pfefferle W."/>
            <person name="Puehler A."/>
            <person name="Rey D.A."/>
            <person name="Rueckert C."/>
            <person name="Rupp O."/>
            <person name="Sahm H."/>
            <person name="Wendisch V.F."/>
            <person name="Wiegraebe I."/>
            <person name="Tauch A."/>
        </authorList>
    </citation>
    <scope>NUCLEOTIDE SEQUENCE [LARGE SCALE GENOMIC DNA]</scope>
    <source>
        <strain>ATCC 13032 / DSM 20300 / JCM 1318 / BCRC 11384 / CCUG 27702 / LMG 3730 / NBRC 12168 / NCIMB 10025 / NRRL B-2784 / 534</strain>
    </source>
</reference>
<evidence type="ECO:0000255" key="1">
    <source>
        <dbReference type="HAMAP-Rule" id="MF_01139"/>
    </source>
</evidence>
<evidence type="ECO:0000305" key="2"/>
<comment type="function">
    <text evidence="1">Catalyzes the condensation of isopentenyl diphosphate (IPP) with allylic pyrophosphates generating different type of terpenoids.</text>
</comment>
<comment type="cofactor">
    <cofactor evidence="1">
        <name>Mg(2+)</name>
        <dbReference type="ChEBI" id="CHEBI:18420"/>
    </cofactor>
    <text evidence="1">Binds 2 magnesium ions per subunit.</text>
</comment>
<comment type="subunit">
    <text evidence="1">Homodimer.</text>
</comment>
<comment type="similarity">
    <text evidence="1">Belongs to the UPP synthase family.</text>
</comment>
<comment type="sequence caution" evidence="2">
    <conflict type="erroneous initiation">
        <sequence resource="EMBL-CDS" id="CAF19697"/>
    </conflict>
    <text>Extended N-terminus.</text>
</comment>
<feature type="chain" id="PRO_0000123605" description="Isoprenyl transferase 1">
    <location>
        <begin position="1"/>
        <end position="225"/>
    </location>
</feature>
<feature type="active site" evidence="1">
    <location>
        <position position="3"/>
    </location>
</feature>
<feature type="active site" description="Proton acceptor" evidence="1">
    <location>
        <position position="52"/>
    </location>
</feature>
<feature type="binding site" evidence="1">
    <location>
        <position position="3"/>
    </location>
    <ligand>
        <name>Mg(2+)</name>
        <dbReference type="ChEBI" id="CHEBI:18420"/>
    </ligand>
</feature>
<feature type="binding site" evidence="1">
    <location>
        <begin position="4"/>
        <end position="7"/>
    </location>
    <ligand>
        <name>substrate</name>
    </ligand>
</feature>
<feature type="binding site" evidence="1">
    <location>
        <position position="8"/>
    </location>
    <ligand>
        <name>substrate</name>
    </ligand>
</feature>
<feature type="binding site" evidence="1">
    <location>
        <position position="21"/>
    </location>
    <ligand>
        <name>substrate</name>
    </ligand>
</feature>
<feature type="binding site" evidence="1">
    <location>
        <begin position="49"/>
        <end position="51"/>
    </location>
    <ligand>
        <name>substrate</name>
    </ligand>
</feature>
<feature type="binding site" evidence="1">
    <location>
        <position position="55"/>
    </location>
    <ligand>
        <name>substrate</name>
    </ligand>
</feature>
<feature type="binding site" evidence="1">
    <location>
        <position position="174"/>
    </location>
    <ligand>
        <name>substrate</name>
    </ligand>
</feature>
<feature type="binding site" evidence="1">
    <location>
        <begin position="180"/>
        <end position="182"/>
    </location>
    <ligand>
        <name>substrate</name>
    </ligand>
</feature>
<feature type="binding site" evidence="1">
    <location>
        <position position="193"/>
    </location>
    <ligand>
        <name>Mg(2+)</name>
        <dbReference type="ChEBI" id="CHEBI:18420"/>
    </ligand>
</feature>
<feature type="sequence conflict" description="In Ref. 1." evidence="2" ref="1">
    <original>KIGEMV</original>
    <variation>RSRDG</variation>
    <location>
        <begin position="27"/>
        <end position="32"/>
    </location>
</feature>
<feature type="sequence conflict" description="In Ref. 1." evidence="2" ref="1">
    <original>DDVDVNLVT</original>
    <variation>AGVMSRRQSRD</variation>
    <location>
        <begin position="36"/>
        <end position="44"/>
    </location>
</feature>
<feature type="sequence conflict" description="In Ref. 1." evidence="2" ref="1">
    <location>
        <position position="67"/>
    </location>
</feature>
<feature type="sequence conflict" description="In Ref. 1." evidence="2" ref="1">
    <original>N</original>
    <variation>K</variation>
    <location>
        <position position="80"/>
    </location>
</feature>
<feature type="sequence conflict" description="In Ref. 1." evidence="2" ref="1">
    <original>L</original>
    <variation>V</variation>
    <location>
        <position position="92"/>
    </location>
</feature>
<feature type="sequence conflict" description="In Ref. 1." evidence="2" ref="1">
    <original>RIDFLRAIRDYSQRSRRFGK</original>
    <variation>PSTSSAPFATTRSAAEDSVNNLFSKERHV</variation>
    <location>
        <begin position="206"/>
        <end position="225"/>
    </location>
</feature>
<proteinExistence type="inferred from homology"/>
<sequence>MCDGNRRWAREAGFTDVSHGHRVGAKKIGEMVRWCDDVDVNLVTVYLLSMENLGRSSEELQLLFDIIADVADELARPETNCRVRLVGHLDLLPDPVACRLRKAEEATVNNTGIAVNMAVGYGGRQEIVDAVQKLLTIGKDEGLSVDELIESVKVDAISTHLYTSGQPDPDLVIRTSGEQRLSGFMLWQSAYSEIWFTDTYWPAFRRIDFLRAIRDYSQRSRRFGK</sequence>